<feature type="chain" id="PRO_0000302572" description="Acyl-[acyl-carrier-protein]--UDP-N-acetylglucosamine O-acyltransferase">
    <location>
        <begin position="1"/>
        <end position="262"/>
    </location>
</feature>
<dbReference type="EC" id="2.3.1.129" evidence="1"/>
<dbReference type="EMBL" id="CP000243">
    <property type="protein sequence ID" value="ABE05706.1"/>
    <property type="molecule type" value="Genomic_DNA"/>
</dbReference>
<dbReference type="RefSeq" id="WP_000565966.1">
    <property type="nucleotide sequence ID" value="NZ_CP064825.1"/>
</dbReference>
<dbReference type="SMR" id="Q1RG08"/>
<dbReference type="GeneID" id="93777244"/>
<dbReference type="KEGG" id="eci:UTI89_C0196"/>
<dbReference type="HOGENOM" id="CLU_061249_0_0_6"/>
<dbReference type="UniPathway" id="UPA00359">
    <property type="reaction ID" value="UER00477"/>
</dbReference>
<dbReference type="Proteomes" id="UP000001952">
    <property type="component" value="Chromosome"/>
</dbReference>
<dbReference type="GO" id="GO:0005737">
    <property type="term" value="C:cytoplasm"/>
    <property type="evidence" value="ECO:0007669"/>
    <property type="project" value="UniProtKB-SubCell"/>
</dbReference>
<dbReference type="GO" id="GO:0016020">
    <property type="term" value="C:membrane"/>
    <property type="evidence" value="ECO:0007669"/>
    <property type="project" value="GOC"/>
</dbReference>
<dbReference type="GO" id="GO:0008780">
    <property type="term" value="F:acyl-[acyl-carrier-protein]-UDP-N-acetylglucosamine O-acyltransferase activity"/>
    <property type="evidence" value="ECO:0007669"/>
    <property type="project" value="UniProtKB-UniRule"/>
</dbReference>
<dbReference type="GO" id="GO:0009245">
    <property type="term" value="P:lipid A biosynthetic process"/>
    <property type="evidence" value="ECO:0007669"/>
    <property type="project" value="UniProtKB-UniRule"/>
</dbReference>
<dbReference type="CDD" id="cd03351">
    <property type="entry name" value="LbH_UDP-GlcNAc_AT"/>
    <property type="match status" value="1"/>
</dbReference>
<dbReference type="FunFam" id="1.20.1180.10:FF:000001">
    <property type="entry name" value="Acyl-[acyl-carrier-protein]--UDP-N-acetylglucosamine O-acyltransferase"/>
    <property type="match status" value="1"/>
</dbReference>
<dbReference type="FunFam" id="2.160.10.10:FF:000003">
    <property type="entry name" value="Acyl-[acyl-carrier-protein]--UDP-N-acetylglucosamine O-acyltransferase"/>
    <property type="match status" value="1"/>
</dbReference>
<dbReference type="Gene3D" id="2.160.10.10">
    <property type="entry name" value="Hexapeptide repeat proteins"/>
    <property type="match status" value="1"/>
</dbReference>
<dbReference type="Gene3D" id="1.20.1180.10">
    <property type="entry name" value="Udp N-acetylglucosamine O-acyltransferase, C-terminal domain"/>
    <property type="match status" value="1"/>
</dbReference>
<dbReference type="HAMAP" id="MF_00387">
    <property type="entry name" value="LpxA"/>
    <property type="match status" value="1"/>
</dbReference>
<dbReference type="InterPro" id="IPR029098">
    <property type="entry name" value="Acetyltransf_C"/>
</dbReference>
<dbReference type="InterPro" id="IPR037157">
    <property type="entry name" value="Acetyltransf_C_sf"/>
</dbReference>
<dbReference type="InterPro" id="IPR001451">
    <property type="entry name" value="Hexapep"/>
</dbReference>
<dbReference type="InterPro" id="IPR018357">
    <property type="entry name" value="Hexapep_transf_CS"/>
</dbReference>
<dbReference type="InterPro" id="IPR010137">
    <property type="entry name" value="Lipid_A_LpxA"/>
</dbReference>
<dbReference type="InterPro" id="IPR011004">
    <property type="entry name" value="Trimer_LpxA-like_sf"/>
</dbReference>
<dbReference type="NCBIfam" id="TIGR01852">
    <property type="entry name" value="lipid_A_lpxA"/>
    <property type="match status" value="1"/>
</dbReference>
<dbReference type="NCBIfam" id="NF003657">
    <property type="entry name" value="PRK05289.1"/>
    <property type="match status" value="1"/>
</dbReference>
<dbReference type="PANTHER" id="PTHR43480">
    <property type="entry name" value="ACYL-[ACYL-CARRIER-PROTEIN]--UDP-N-ACETYLGLUCOSAMINE O-ACYLTRANSFERASE"/>
    <property type="match status" value="1"/>
</dbReference>
<dbReference type="PANTHER" id="PTHR43480:SF1">
    <property type="entry name" value="ACYL-[ACYL-CARRIER-PROTEIN]--UDP-N-ACETYLGLUCOSAMINE O-ACYLTRANSFERASE, MITOCHONDRIAL-RELATED"/>
    <property type="match status" value="1"/>
</dbReference>
<dbReference type="Pfam" id="PF13720">
    <property type="entry name" value="Acetyltransf_11"/>
    <property type="match status" value="1"/>
</dbReference>
<dbReference type="Pfam" id="PF00132">
    <property type="entry name" value="Hexapep"/>
    <property type="match status" value="2"/>
</dbReference>
<dbReference type="PIRSF" id="PIRSF000456">
    <property type="entry name" value="UDP-GlcNAc_acltr"/>
    <property type="match status" value="1"/>
</dbReference>
<dbReference type="SUPFAM" id="SSF51161">
    <property type="entry name" value="Trimeric LpxA-like enzymes"/>
    <property type="match status" value="1"/>
</dbReference>
<dbReference type="PROSITE" id="PS00101">
    <property type="entry name" value="HEXAPEP_TRANSFERASES"/>
    <property type="match status" value="2"/>
</dbReference>
<protein>
    <recommendedName>
        <fullName evidence="1">Acyl-[acyl-carrier-protein]--UDP-N-acetylglucosamine O-acyltransferase</fullName>
        <shortName evidence="1">UDP-N-acetylglucosamine acyltransferase</shortName>
        <ecNumber evidence="1">2.3.1.129</ecNumber>
    </recommendedName>
</protein>
<reference key="1">
    <citation type="journal article" date="2006" name="Proc. Natl. Acad. Sci. U.S.A.">
        <title>Identification of genes subject to positive selection in uropathogenic strains of Escherichia coli: a comparative genomics approach.</title>
        <authorList>
            <person name="Chen S.L."/>
            <person name="Hung C.-S."/>
            <person name="Xu J."/>
            <person name="Reigstad C.S."/>
            <person name="Magrini V."/>
            <person name="Sabo A."/>
            <person name="Blasiar D."/>
            <person name="Bieri T."/>
            <person name="Meyer R.R."/>
            <person name="Ozersky P."/>
            <person name="Armstrong J.R."/>
            <person name="Fulton R.S."/>
            <person name="Latreille J.P."/>
            <person name="Spieth J."/>
            <person name="Hooton T.M."/>
            <person name="Mardis E.R."/>
            <person name="Hultgren S.J."/>
            <person name="Gordon J.I."/>
        </authorList>
    </citation>
    <scope>NUCLEOTIDE SEQUENCE [LARGE SCALE GENOMIC DNA]</scope>
    <source>
        <strain>UTI89 / UPEC</strain>
    </source>
</reference>
<comment type="function">
    <text evidence="1">Involved in the biosynthesis of lipid A, a phosphorylated glycolipid that anchors the lipopolysaccharide to the outer membrane of the cell.</text>
</comment>
<comment type="catalytic activity">
    <reaction evidence="1">
        <text>a (3R)-hydroxyacyl-[ACP] + UDP-N-acetyl-alpha-D-glucosamine = a UDP-3-O-[(3R)-3-hydroxyacyl]-N-acetyl-alpha-D-glucosamine + holo-[ACP]</text>
        <dbReference type="Rhea" id="RHEA:67812"/>
        <dbReference type="Rhea" id="RHEA-COMP:9685"/>
        <dbReference type="Rhea" id="RHEA-COMP:9945"/>
        <dbReference type="ChEBI" id="CHEBI:57705"/>
        <dbReference type="ChEBI" id="CHEBI:64479"/>
        <dbReference type="ChEBI" id="CHEBI:78827"/>
        <dbReference type="ChEBI" id="CHEBI:173225"/>
        <dbReference type="EC" id="2.3.1.129"/>
    </reaction>
</comment>
<comment type="pathway">
    <text evidence="1">Glycolipid biosynthesis; lipid IV(A) biosynthesis; lipid IV(A) from (3R)-3-hydroxytetradecanoyl-[acyl-carrier-protein] and UDP-N-acetyl-alpha-D-glucosamine: step 1/6.</text>
</comment>
<comment type="subunit">
    <text evidence="1">Homotrimer.</text>
</comment>
<comment type="subcellular location">
    <subcellularLocation>
        <location evidence="1">Cytoplasm</location>
    </subcellularLocation>
</comment>
<comment type="similarity">
    <text evidence="1">Belongs to the transferase hexapeptide repeat family. LpxA subfamily.</text>
</comment>
<gene>
    <name evidence="1" type="primary">lpxA</name>
    <name type="ordered locus">UTI89_C0196</name>
</gene>
<sequence length="262" mass="28080">MIDKSAFVHPTAIVEEGASIGANAHIGPFCIVGPHVEIGEGTVLKSHVVVNGHTKIGRDNEIYQFASIGEVNQDLKYAGEPTRVEIGDRNRIRESVTIHRGTVQGGGLTKVGSDNLLMINAHIAHDCTVGNRCILANNATLAGHVSVDDFAIIGGMTAVHQFCIIGAHVMVGGCSGVAQDVPPYVIAQGNHATPFGVNIEGLKRRGFSREAITAIRNAYKLIYRSGKTLDEVKPEIAELAETYPEVKAFTDFFARSTRGLIR</sequence>
<name>LPXA_ECOUT</name>
<evidence type="ECO:0000255" key="1">
    <source>
        <dbReference type="HAMAP-Rule" id="MF_00387"/>
    </source>
</evidence>
<organism>
    <name type="scientific">Escherichia coli (strain UTI89 / UPEC)</name>
    <dbReference type="NCBI Taxonomy" id="364106"/>
    <lineage>
        <taxon>Bacteria</taxon>
        <taxon>Pseudomonadati</taxon>
        <taxon>Pseudomonadota</taxon>
        <taxon>Gammaproteobacteria</taxon>
        <taxon>Enterobacterales</taxon>
        <taxon>Enterobacteriaceae</taxon>
        <taxon>Escherichia</taxon>
    </lineage>
</organism>
<accession>Q1RG08</accession>
<keyword id="KW-0012">Acyltransferase</keyword>
<keyword id="KW-0963">Cytoplasm</keyword>
<keyword id="KW-0441">Lipid A biosynthesis</keyword>
<keyword id="KW-0444">Lipid biosynthesis</keyword>
<keyword id="KW-0443">Lipid metabolism</keyword>
<keyword id="KW-0677">Repeat</keyword>
<keyword id="KW-0808">Transferase</keyword>
<proteinExistence type="inferred from homology"/>